<feature type="chain" id="PRO_0000330245" description="tRNA-dihydrouridine(47) synthase [NAD(P)(+)]">
    <location>
        <begin position="1"/>
        <end position="739"/>
    </location>
</feature>
<feature type="zinc finger region" description="C3H1-type 1" evidence="4">
    <location>
        <begin position="143"/>
        <end position="175"/>
    </location>
</feature>
<feature type="zinc finger region" description="C3H1-type 2" evidence="4">
    <location>
        <begin position="192"/>
        <end position="217"/>
    </location>
</feature>
<feature type="region of interest" description="Disordered" evidence="5">
    <location>
        <begin position="1"/>
        <end position="64"/>
    </location>
</feature>
<feature type="region of interest" description="Disordered" evidence="5">
    <location>
        <begin position="98"/>
        <end position="142"/>
    </location>
</feature>
<feature type="compositionally biased region" description="Low complexity" evidence="5">
    <location>
        <begin position="8"/>
        <end position="37"/>
    </location>
</feature>
<feature type="compositionally biased region" description="Basic and acidic residues" evidence="5">
    <location>
        <begin position="102"/>
        <end position="116"/>
    </location>
</feature>
<feature type="compositionally biased region" description="Basic residues" evidence="5">
    <location>
        <begin position="121"/>
        <end position="130"/>
    </location>
</feature>
<feature type="active site" description="Proton donor" evidence="2">
    <location>
        <position position="441"/>
    </location>
</feature>
<feature type="binding site" evidence="2">
    <location>
        <begin position="334"/>
        <end position="336"/>
    </location>
    <ligand>
        <name>FMN</name>
        <dbReference type="ChEBI" id="CHEBI:58210"/>
    </ligand>
</feature>
<feature type="binding site" evidence="2">
    <location>
        <position position="409"/>
    </location>
    <ligand>
        <name>FMN</name>
        <dbReference type="ChEBI" id="CHEBI:58210"/>
    </ligand>
</feature>
<feature type="binding site" evidence="2">
    <location>
        <position position="481"/>
    </location>
    <ligand>
        <name>FMN</name>
        <dbReference type="ChEBI" id="CHEBI:58210"/>
    </ligand>
</feature>
<feature type="binding site" evidence="2">
    <location>
        <position position="523"/>
    </location>
    <ligand>
        <name>FMN</name>
        <dbReference type="ChEBI" id="CHEBI:58210"/>
    </ligand>
</feature>
<feature type="binding site" evidence="2">
    <location>
        <begin position="580"/>
        <end position="582"/>
    </location>
    <ligand>
        <name>FMN</name>
        <dbReference type="ChEBI" id="CHEBI:58210"/>
    </ligand>
</feature>
<feature type="binding site" evidence="2">
    <location>
        <begin position="604"/>
        <end position="605"/>
    </location>
    <ligand>
        <name>FMN</name>
        <dbReference type="ChEBI" id="CHEBI:58210"/>
    </ligand>
</feature>
<evidence type="ECO:0000250" key="1">
    <source>
        <dbReference type="UniProtKB" id="Q06053"/>
    </source>
</evidence>
<evidence type="ECO:0000250" key="2">
    <source>
        <dbReference type="UniProtKB" id="Q5SMC7"/>
    </source>
</evidence>
<evidence type="ECO:0000250" key="3">
    <source>
        <dbReference type="UniProtKB" id="Q9UTH9"/>
    </source>
</evidence>
<evidence type="ECO:0000255" key="4">
    <source>
        <dbReference type="PROSITE-ProRule" id="PRU00723"/>
    </source>
</evidence>
<evidence type="ECO:0000256" key="5">
    <source>
        <dbReference type="SAM" id="MobiDB-lite"/>
    </source>
</evidence>
<evidence type="ECO:0000305" key="6"/>
<organism>
    <name type="scientific">Phaeosphaeria nodorum (strain SN15 / ATCC MYA-4574 / FGSC 10173)</name>
    <name type="common">Glume blotch fungus</name>
    <name type="synonym">Parastagonospora nodorum</name>
    <dbReference type="NCBI Taxonomy" id="321614"/>
    <lineage>
        <taxon>Eukaryota</taxon>
        <taxon>Fungi</taxon>
        <taxon>Dikarya</taxon>
        <taxon>Ascomycota</taxon>
        <taxon>Pezizomycotina</taxon>
        <taxon>Dothideomycetes</taxon>
        <taxon>Pleosporomycetidae</taxon>
        <taxon>Pleosporales</taxon>
        <taxon>Pleosporineae</taxon>
        <taxon>Phaeosphaeriaceae</taxon>
        <taxon>Parastagonospora</taxon>
    </lineage>
</organism>
<proteinExistence type="inferred from homology"/>
<gene>
    <name type="primary">DUS3</name>
    <name type="ORF">SNOG_11628</name>
</gene>
<keyword id="KW-0963">Cytoplasm</keyword>
<keyword id="KW-0285">Flavoprotein</keyword>
<keyword id="KW-0288">FMN</keyword>
<keyword id="KW-0479">Metal-binding</keyword>
<keyword id="KW-0507">mRNA processing</keyword>
<keyword id="KW-0520">NAD</keyword>
<keyword id="KW-0521">NADP</keyword>
<keyword id="KW-0539">Nucleus</keyword>
<keyword id="KW-0560">Oxidoreductase</keyword>
<keyword id="KW-0677">Repeat</keyword>
<keyword id="KW-0819">tRNA processing</keyword>
<keyword id="KW-0862">Zinc</keyword>
<keyword id="KW-0863">Zinc-finger</keyword>
<accession>Q0U9D6</accession>
<dbReference type="EC" id="1.3.1.89" evidence="1"/>
<dbReference type="EC" id="1.3.1.-" evidence="3"/>
<dbReference type="EMBL" id="CH445343">
    <property type="protein sequence ID" value="EAT81336.2"/>
    <property type="molecule type" value="Genomic_DNA"/>
</dbReference>
<dbReference type="RefSeq" id="XP_001801867.1">
    <property type="nucleotide sequence ID" value="XM_001801815.1"/>
</dbReference>
<dbReference type="SMR" id="Q0U9D6"/>
<dbReference type="FunCoup" id="Q0U9D6">
    <property type="interactions" value="858"/>
</dbReference>
<dbReference type="STRING" id="321614.Q0U9D6"/>
<dbReference type="EnsemblFungi" id="SNOT_11628">
    <property type="protein sequence ID" value="SNOT_11628"/>
    <property type="gene ID" value="SNOG_11628"/>
</dbReference>
<dbReference type="GeneID" id="5978775"/>
<dbReference type="KEGG" id="pno:SNOG_11628"/>
<dbReference type="VEuPathDB" id="FungiDB:JI435_116280"/>
<dbReference type="eggNOG" id="KOG2333">
    <property type="taxonomic scope" value="Eukaryota"/>
</dbReference>
<dbReference type="HOGENOM" id="CLU_013299_7_0_1"/>
<dbReference type="InParanoid" id="Q0U9D6"/>
<dbReference type="Proteomes" id="UP000001055">
    <property type="component" value="Unassembled WGS sequence"/>
</dbReference>
<dbReference type="GO" id="GO:0005737">
    <property type="term" value="C:cytoplasm"/>
    <property type="evidence" value="ECO:0007669"/>
    <property type="project" value="UniProtKB-SubCell"/>
</dbReference>
<dbReference type="GO" id="GO:0034399">
    <property type="term" value="C:nuclear periphery"/>
    <property type="evidence" value="ECO:0007669"/>
    <property type="project" value="EnsemblFungi"/>
</dbReference>
<dbReference type="GO" id="GO:0050660">
    <property type="term" value="F:flavin adenine dinucleotide binding"/>
    <property type="evidence" value="ECO:0007669"/>
    <property type="project" value="InterPro"/>
</dbReference>
<dbReference type="GO" id="GO:0106414">
    <property type="term" value="F:mRNA dihydrouridine synthase activity"/>
    <property type="evidence" value="ECO:0007669"/>
    <property type="project" value="RHEA"/>
</dbReference>
<dbReference type="GO" id="GO:0017150">
    <property type="term" value="F:tRNA dihydrouridine synthase activity"/>
    <property type="evidence" value="ECO:0000318"/>
    <property type="project" value="GO_Central"/>
</dbReference>
<dbReference type="GO" id="GO:0102265">
    <property type="term" value="F:tRNA-dihydrouridine47 synthase activity"/>
    <property type="evidence" value="ECO:0007669"/>
    <property type="project" value="UniProtKB-EC"/>
</dbReference>
<dbReference type="GO" id="GO:0008270">
    <property type="term" value="F:zinc ion binding"/>
    <property type="evidence" value="ECO:0007669"/>
    <property type="project" value="UniProtKB-KW"/>
</dbReference>
<dbReference type="GO" id="GO:0006397">
    <property type="term" value="P:mRNA processing"/>
    <property type="evidence" value="ECO:0007669"/>
    <property type="project" value="UniProtKB-KW"/>
</dbReference>
<dbReference type="CDD" id="cd02801">
    <property type="entry name" value="DUS_like_FMN"/>
    <property type="match status" value="1"/>
</dbReference>
<dbReference type="FunFam" id="3.20.20.70:FF:000145">
    <property type="entry name" value="tRNA-dihydrouridine(47) synthase [NAD(P)(+)]"/>
    <property type="match status" value="1"/>
</dbReference>
<dbReference type="Gene3D" id="3.20.20.70">
    <property type="entry name" value="Aldolase class I"/>
    <property type="match status" value="1"/>
</dbReference>
<dbReference type="Gene3D" id="4.10.1000.10">
    <property type="entry name" value="Zinc finger, CCCH-type"/>
    <property type="match status" value="1"/>
</dbReference>
<dbReference type="InterPro" id="IPR013785">
    <property type="entry name" value="Aldolase_TIM"/>
</dbReference>
<dbReference type="InterPro" id="IPR035587">
    <property type="entry name" value="DUS-like_FMN-bd"/>
</dbReference>
<dbReference type="InterPro" id="IPR018517">
    <property type="entry name" value="tRNA_hU_synthase_CS"/>
</dbReference>
<dbReference type="InterPro" id="IPR000571">
    <property type="entry name" value="Znf_CCCH"/>
</dbReference>
<dbReference type="PANTHER" id="PTHR45846">
    <property type="entry name" value="TRNA-DIHYDROURIDINE(47) SYNTHASE [NAD(P)(+)]-LIKE"/>
    <property type="match status" value="1"/>
</dbReference>
<dbReference type="PANTHER" id="PTHR45846:SF1">
    <property type="entry name" value="TRNA-DIHYDROURIDINE(47) SYNTHASE [NAD(P)(+)]-LIKE"/>
    <property type="match status" value="1"/>
</dbReference>
<dbReference type="Pfam" id="PF01207">
    <property type="entry name" value="Dus"/>
    <property type="match status" value="2"/>
</dbReference>
<dbReference type="SUPFAM" id="SSF51395">
    <property type="entry name" value="FMN-linked oxidoreductases"/>
    <property type="match status" value="1"/>
</dbReference>
<dbReference type="PROSITE" id="PS01136">
    <property type="entry name" value="UPF0034"/>
    <property type="match status" value="1"/>
</dbReference>
<dbReference type="PROSITE" id="PS50103">
    <property type="entry name" value="ZF_C3H1"/>
    <property type="match status" value="2"/>
</dbReference>
<name>DUS3_PHANO</name>
<protein>
    <recommendedName>
        <fullName>tRNA-dihydrouridine(47) synthase [NAD(P)(+)]</fullName>
        <ecNumber evidence="1">1.3.1.89</ecNumber>
    </recommendedName>
    <alternativeName>
        <fullName>mRNA-dihydrouridine synthase DUS3</fullName>
        <ecNumber evidence="3">1.3.1.-</ecNumber>
    </alternativeName>
    <alternativeName>
        <fullName>tRNA-dihydrouridine synthase 3</fullName>
    </alternativeName>
</protein>
<reference key="1">
    <citation type="journal article" date="2007" name="Plant Cell">
        <title>Dothideomycete-plant interactions illuminated by genome sequencing and EST analysis of the wheat pathogen Stagonospora nodorum.</title>
        <authorList>
            <person name="Hane J.K."/>
            <person name="Lowe R.G.T."/>
            <person name="Solomon P.S."/>
            <person name="Tan K.-C."/>
            <person name="Schoch C.L."/>
            <person name="Spatafora J.W."/>
            <person name="Crous P.W."/>
            <person name="Kodira C.D."/>
            <person name="Birren B.W."/>
            <person name="Galagan J.E."/>
            <person name="Torriani S.F.F."/>
            <person name="McDonald B.A."/>
            <person name="Oliver R.P."/>
        </authorList>
    </citation>
    <scope>NUCLEOTIDE SEQUENCE [LARGE SCALE GENOMIC DNA]</scope>
    <source>
        <strain>SN15 / ATCC MYA-4574 / FGSC 10173</strain>
    </source>
</reference>
<sequence length="739" mass="82654">MAGEGDQVASDAPVPSAVADSNGVESGNRPSSSNPEPSSDKKRVRTGSQDIDMADAPVKRQKGVAPIKAECVALPNIFIIHRSDNKAEVKTAPIDDDAAEAADARHKAGDSRDNRAGAKGKNNKKDKKQKGQNTSRTFGSSHDKLPLCGTRALSNEFSAPECRFGDKCKFEHDLRKYLKEGRREDLTTFDGQCPIYEVRGYCHLGWKCRFVGSHSEERATEHGRQELVLREDAERKAKFAGLEDDEVEVVNILPKEVRFGLSRRKIGTPRSDQYLEWINSNKDQERELFDNNQGDTEALKEERDARRAEYVEAPFRPSEKRRLYYGPETPVLAPLTTQGNMPYRRLCVDLGCQVTWSEMAMGMPLIQGERGEWALMKAHESEIAAPRFQSKGTVVQGYDNAADIRFGAQIAANKPWLANKTVEVLTDNCPKLRAIDLNCGCPINLVCEKGSGSALLDSEAKLENILRGMNYVSKEVPITVKVRMGTKDNHPTAQKLIKRLVLGGYEALASDKGTSGVAAITLHGRSKQQRYSKSADWSYIAECASLINRLKKEKDAQTDTAAEADPRDQANGGHVYFVGNGDCYSHEDYYNHMNNANVDSVMIGRGALIKPWIFEEIEKGQYLDKSATERLAYIEKFAKYGLQTWGSDELGIGTTRRFLLEWLSFAHRYVPVGLLEHLPPNIQDRPPRFRGRNDLETLMASEHYLDWIKLSEMFLGKAPPTFKFEPKHKSNAYEIEAEG</sequence>
<comment type="function">
    <text evidence="1 3">Catalyzes the synthesis of dihydrouridine, a modified base found in the D-loop of most tRNAs. Specifically modifies U47 in cytoplasmic tRNAs (By similarity). Catalyzes the synthesis of dihydrouridine in some mRNAs, thereby affecting their translation (By similarity).</text>
</comment>
<comment type="catalytic activity">
    <reaction evidence="1">
        <text>5,6-dihydrouridine(47) in tRNA + NAD(+) = uridine(47) in tRNA + NADH + H(+)</text>
        <dbReference type="Rhea" id="RHEA:53364"/>
        <dbReference type="Rhea" id="RHEA-COMP:13539"/>
        <dbReference type="Rhea" id="RHEA-COMP:13540"/>
        <dbReference type="ChEBI" id="CHEBI:15378"/>
        <dbReference type="ChEBI" id="CHEBI:57540"/>
        <dbReference type="ChEBI" id="CHEBI:57945"/>
        <dbReference type="ChEBI" id="CHEBI:65315"/>
        <dbReference type="ChEBI" id="CHEBI:74443"/>
        <dbReference type="EC" id="1.3.1.89"/>
    </reaction>
    <physiologicalReaction direction="right-to-left" evidence="1">
        <dbReference type="Rhea" id="RHEA:53366"/>
    </physiologicalReaction>
</comment>
<comment type="catalytic activity">
    <reaction evidence="1">
        <text>5,6-dihydrouridine(47) in tRNA + NADP(+) = uridine(47) in tRNA + NADPH + H(+)</text>
        <dbReference type="Rhea" id="RHEA:53360"/>
        <dbReference type="Rhea" id="RHEA-COMP:13539"/>
        <dbReference type="Rhea" id="RHEA-COMP:13540"/>
        <dbReference type="ChEBI" id="CHEBI:15378"/>
        <dbReference type="ChEBI" id="CHEBI:57783"/>
        <dbReference type="ChEBI" id="CHEBI:58349"/>
        <dbReference type="ChEBI" id="CHEBI:65315"/>
        <dbReference type="ChEBI" id="CHEBI:74443"/>
        <dbReference type="EC" id="1.3.1.89"/>
    </reaction>
    <physiologicalReaction direction="right-to-left" evidence="1">
        <dbReference type="Rhea" id="RHEA:53362"/>
    </physiologicalReaction>
</comment>
<comment type="catalytic activity">
    <reaction evidence="3">
        <text>a 5,6-dihydrouridine in mRNA + NAD(+) = a uridine in mRNA + NADH + H(+)</text>
        <dbReference type="Rhea" id="RHEA:69851"/>
        <dbReference type="Rhea" id="RHEA-COMP:14658"/>
        <dbReference type="Rhea" id="RHEA-COMP:17789"/>
        <dbReference type="ChEBI" id="CHEBI:15378"/>
        <dbReference type="ChEBI" id="CHEBI:57540"/>
        <dbReference type="ChEBI" id="CHEBI:57945"/>
        <dbReference type="ChEBI" id="CHEBI:65315"/>
        <dbReference type="ChEBI" id="CHEBI:74443"/>
    </reaction>
    <physiologicalReaction direction="right-to-left" evidence="3">
        <dbReference type="Rhea" id="RHEA:69853"/>
    </physiologicalReaction>
</comment>
<comment type="catalytic activity">
    <reaction evidence="3">
        <text>a 5,6-dihydrouridine in mRNA + NADP(+) = a uridine in mRNA + NADPH + H(+)</text>
        <dbReference type="Rhea" id="RHEA:69855"/>
        <dbReference type="Rhea" id="RHEA-COMP:14658"/>
        <dbReference type="Rhea" id="RHEA-COMP:17789"/>
        <dbReference type="ChEBI" id="CHEBI:15378"/>
        <dbReference type="ChEBI" id="CHEBI:57783"/>
        <dbReference type="ChEBI" id="CHEBI:58349"/>
        <dbReference type="ChEBI" id="CHEBI:65315"/>
        <dbReference type="ChEBI" id="CHEBI:74443"/>
    </reaction>
    <physiologicalReaction direction="right-to-left" evidence="3">
        <dbReference type="Rhea" id="RHEA:69857"/>
    </physiologicalReaction>
</comment>
<comment type="cofactor">
    <cofactor evidence="2">
        <name>FMN</name>
        <dbReference type="ChEBI" id="CHEBI:58210"/>
    </cofactor>
</comment>
<comment type="subcellular location">
    <subcellularLocation>
        <location evidence="1">Cytoplasm</location>
    </subcellularLocation>
    <subcellularLocation>
        <location evidence="1">Nucleus</location>
    </subcellularLocation>
</comment>
<comment type="similarity">
    <text evidence="6">Belongs to the Dus family. Dus3 subfamily.</text>
</comment>